<gene>
    <name evidence="1" type="primary">mnmA</name>
    <name type="ordered locus">LI0203</name>
</gene>
<accession>Q1MRW7</accession>
<keyword id="KW-0067">ATP-binding</keyword>
<keyword id="KW-0963">Cytoplasm</keyword>
<keyword id="KW-1015">Disulfide bond</keyword>
<keyword id="KW-0547">Nucleotide-binding</keyword>
<keyword id="KW-1185">Reference proteome</keyword>
<keyword id="KW-0694">RNA-binding</keyword>
<keyword id="KW-0808">Transferase</keyword>
<keyword id="KW-0819">tRNA processing</keyword>
<keyword id="KW-0820">tRNA-binding</keyword>
<feature type="chain" id="PRO_0000349677" description="tRNA-specific 2-thiouridylase MnmA">
    <location>
        <begin position="1"/>
        <end position="352"/>
    </location>
</feature>
<feature type="region of interest" description="Interaction with tRNA" evidence="1">
    <location>
        <begin position="139"/>
        <end position="141"/>
    </location>
</feature>
<feature type="region of interest" description="Interaction with tRNA" evidence="1">
    <location>
        <begin position="294"/>
        <end position="295"/>
    </location>
</feature>
<feature type="active site" description="Nucleophile" evidence="1">
    <location>
        <position position="92"/>
    </location>
</feature>
<feature type="active site" description="Cysteine persulfide intermediate" evidence="1">
    <location>
        <position position="189"/>
    </location>
</feature>
<feature type="binding site" evidence="1">
    <location>
        <begin position="6"/>
        <end position="13"/>
    </location>
    <ligand>
        <name>ATP</name>
        <dbReference type="ChEBI" id="CHEBI:30616"/>
    </ligand>
</feature>
<feature type="binding site" evidence="1">
    <location>
        <position position="116"/>
    </location>
    <ligand>
        <name>ATP</name>
        <dbReference type="ChEBI" id="CHEBI:30616"/>
    </ligand>
</feature>
<feature type="site" description="Interaction with tRNA" evidence="1">
    <location>
        <position position="117"/>
    </location>
</feature>
<feature type="site" description="Interaction with tRNA" evidence="1">
    <location>
        <position position="331"/>
    </location>
</feature>
<feature type="disulfide bond" description="Alternate" evidence="1">
    <location>
        <begin position="92"/>
        <end position="189"/>
    </location>
</feature>
<name>MNMA_LAWIP</name>
<evidence type="ECO:0000255" key="1">
    <source>
        <dbReference type="HAMAP-Rule" id="MF_00144"/>
    </source>
</evidence>
<proteinExistence type="inferred from homology"/>
<organism>
    <name type="scientific">Lawsonia intracellularis (strain PHE/MN1-00)</name>
    <dbReference type="NCBI Taxonomy" id="363253"/>
    <lineage>
        <taxon>Bacteria</taxon>
        <taxon>Pseudomonadati</taxon>
        <taxon>Thermodesulfobacteriota</taxon>
        <taxon>Desulfovibrionia</taxon>
        <taxon>Desulfovibrionales</taxon>
        <taxon>Desulfovibrionaceae</taxon>
        <taxon>Lawsonia</taxon>
    </lineage>
</organism>
<sequence length="352" mass="39228">MNVAVAVSGGTDSLYTLATLREAFGNHHVFALHARFKEQITNDPVPALKEQCHNLNVPLHVVDLHKEFNELIIRPFIKAYADGKTPNPCVHCNAKVKFGLLQKKAQELGANQIATGHYVSLIDHDLYGKALKCGADSTKDQSYFLALTPREQLQTAIFPLGTLRKTEVRERLQKMGLEVPLPKESQEICFVPNDDYRKFLQSSDVDLLSEGRMVMLDGTLVGKHKGLWKYTEGQRRGLGVSWSEPLYVAHKNHSCNELVLGTAKDILVDTCTAQDINFLVPQDNWPKELFVRTRYRQQAVPADIQFVTNTSSSKKITIHFHSPQLPAAPGQLAAIFDKSGYVLAGGLITNDL</sequence>
<dbReference type="EC" id="2.8.1.13" evidence="1"/>
<dbReference type="EMBL" id="AM180252">
    <property type="protein sequence ID" value="CAJ54259.1"/>
    <property type="molecule type" value="Genomic_DNA"/>
</dbReference>
<dbReference type="RefSeq" id="WP_011526285.1">
    <property type="nucleotide sequence ID" value="NC_008011.1"/>
</dbReference>
<dbReference type="SMR" id="Q1MRW7"/>
<dbReference type="STRING" id="363253.LI0203"/>
<dbReference type="KEGG" id="lip:LI0203"/>
<dbReference type="eggNOG" id="COG0482">
    <property type="taxonomic scope" value="Bacteria"/>
</dbReference>
<dbReference type="HOGENOM" id="CLU_035188_0_0_7"/>
<dbReference type="OrthoDB" id="9800696at2"/>
<dbReference type="Proteomes" id="UP000002430">
    <property type="component" value="Chromosome"/>
</dbReference>
<dbReference type="GO" id="GO:0005737">
    <property type="term" value="C:cytoplasm"/>
    <property type="evidence" value="ECO:0007669"/>
    <property type="project" value="UniProtKB-SubCell"/>
</dbReference>
<dbReference type="GO" id="GO:0005524">
    <property type="term" value="F:ATP binding"/>
    <property type="evidence" value="ECO:0007669"/>
    <property type="project" value="UniProtKB-KW"/>
</dbReference>
<dbReference type="GO" id="GO:0000049">
    <property type="term" value="F:tRNA binding"/>
    <property type="evidence" value="ECO:0007669"/>
    <property type="project" value="UniProtKB-KW"/>
</dbReference>
<dbReference type="GO" id="GO:0103016">
    <property type="term" value="F:tRNA-uridine 2-sulfurtransferase activity"/>
    <property type="evidence" value="ECO:0007669"/>
    <property type="project" value="UniProtKB-EC"/>
</dbReference>
<dbReference type="GO" id="GO:0002143">
    <property type="term" value="P:tRNA wobble position uridine thiolation"/>
    <property type="evidence" value="ECO:0007669"/>
    <property type="project" value="TreeGrafter"/>
</dbReference>
<dbReference type="CDD" id="cd01998">
    <property type="entry name" value="MnmA_TRMU-like"/>
    <property type="match status" value="1"/>
</dbReference>
<dbReference type="Gene3D" id="2.30.30.280">
    <property type="entry name" value="Adenine nucleotide alpha hydrolases-like domains"/>
    <property type="match status" value="1"/>
</dbReference>
<dbReference type="Gene3D" id="3.40.50.620">
    <property type="entry name" value="HUPs"/>
    <property type="match status" value="1"/>
</dbReference>
<dbReference type="Gene3D" id="2.40.30.10">
    <property type="entry name" value="Translation factors"/>
    <property type="match status" value="1"/>
</dbReference>
<dbReference type="HAMAP" id="MF_00144">
    <property type="entry name" value="tRNA_thiouridyl_MnmA"/>
    <property type="match status" value="1"/>
</dbReference>
<dbReference type="InterPro" id="IPR004506">
    <property type="entry name" value="MnmA-like"/>
</dbReference>
<dbReference type="InterPro" id="IPR046885">
    <property type="entry name" value="MnmA-like_C"/>
</dbReference>
<dbReference type="InterPro" id="IPR046884">
    <property type="entry name" value="MnmA-like_central"/>
</dbReference>
<dbReference type="InterPro" id="IPR023382">
    <property type="entry name" value="MnmA-like_central_sf"/>
</dbReference>
<dbReference type="InterPro" id="IPR014729">
    <property type="entry name" value="Rossmann-like_a/b/a_fold"/>
</dbReference>
<dbReference type="NCBIfam" id="NF001138">
    <property type="entry name" value="PRK00143.1"/>
    <property type="match status" value="1"/>
</dbReference>
<dbReference type="NCBIfam" id="TIGR00420">
    <property type="entry name" value="trmU"/>
    <property type="match status" value="1"/>
</dbReference>
<dbReference type="PANTHER" id="PTHR11933:SF5">
    <property type="entry name" value="MITOCHONDRIAL TRNA-SPECIFIC 2-THIOURIDYLASE 1"/>
    <property type="match status" value="1"/>
</dbReference>
<dbReference type="PANTHER" id="PTHR11933">
    <property type="entry name" value="TRNA 5-METHYLAMINOMETHYL-2-THIOURIDYLATE -METHYLTRANSFERASE"/>
    <property type="match status" value="1"/>
</dbReference>
<dbReference type="Pfam" id="PF03054">
    <property type="entry name" value="tRNA_Me_trans"/>
    <property type="match status" value="1"/>
</dbReference>
<dbReference type="Pfam" id="PF20258">
    <property type="entry name" value="tRNA_Me_trans_C"/>
    <property type="match status" value="1"/>
</dbReference>
<dbReference type="Pfam" id="PF20259">
    <property type="entry name" value="tRNA_Me_trans_M"/>
    <property type="match status" value="1"/>
</dbReference>
<dbReference type="SUPFAM" id="SSF52402">
    <property type="entry name" value="Adenine nucleotide alpha hydrolases-like"/>
    <property type="match status" value="1"/>
</dbReference>
<comment type="function">
    <text evidence="1">Catalyzes the 2-thiolation of uridine at the wobble position (U34) of tRNA, leading to the formation of s(2)U34.</text>
</comment>
<comment type="catalytic activity">
    <reaction evidence="1">
        <text>S-sulfanyl-L-cysteinyl-[protein] + uridine(34) in tRNA + AH2 + ATP = 2-thiouridine(34) in tRNA + L-cysteinyl-[protein] + A + AMP + diphosphate + H(+)</text>
        <dbReference type="Rhea" id="RHEA:47032"/>
        <dbReference type="Rhea" id="RHEA-COMP:10131"/>
        <dbReference type="Rhea" id="RHEA-COMP:11726"/>
        <dbReference type="Rhea" id="RHEA-COMP:11727"/>
        <dbReference type="Rhea" id="RHEA-COMP:11728"/>
        <dbReference type="ChEBI" id="CHEBI:13193"/>
        <dbReference type="ChEBI" id="CHEBI:15378"/>
        <dbReference type="ChEBI" id="CHEBI:17499"/>
        <dbReference type="ChEBI" id="CHEBI:29950"/>
        <dbReference type="ChEBI" id="CHEBI:30616"/>
        <dbReference type="ChEBI" id="CHEBI:33019"/>
        <dbReference type="ChEBI" id="CHEBI:61963"/>
        <dbReference type="ChEBI" id="CHEBI:65315"/>
        <dbReference type="ChEBI" id="CHEBI:87170"/>
        <dbReference type="ChEBI" id="CHEBI:456215"/>
        <dbReference type="EC" id="2.8.1.13"/>
    </reaction>
</comment>
<comment type="subcellular location">
    <subcellularLocation>
        <location evidence="1">Cytoplasm</location>
    </subcellularLocation>
</comment>
<comment type="similarity">
    <text evidence="1">Belongs to the MnmA/TRMU family.</text>
</comment>
<reference key="1">
    <citation type="submission" date="2005-11" db="EMBL/GenBank/DDBJ databases">
        <title>The complete genome sequence of Lawsonia intracellularis: the causative agent of proliferative enteropathy.</title>
        <authorList>
            <person name="Kaur K."/>
            <person name="Zhang Q."/>
            <person name="Beckler D."/>
            <person name="Munir S."/>
            <person name="Li L."/>
            <person name="Kinsley K."/>
            <person name="Herron L."/>
            <person name="Peterson A."/>
            <person name="May B."/>
            <person name="Singh S."/>
            <person name="Gebhart C."/>
            <person name="Kapur V."/>
        </authorList>
    </citation>
    <scope>NUCLEOTIDE SEQUENCE [LARGE SCALE GENOMIC DNA]</scope>
    <source>
        <strain>PHE/MN1-00</strain>
    </source>
</reference>
<protein>
    <recommendedName>
        <fullName evidence="1">tRNA-specific 2-thiouridylase MnmA</fullName>
        <ecNumber evidence="1">2.8.1.13</ecNumber>
    </recommendedName>
</protein>